<gene>
    <name type="primary">Kibra</name>
    <name type="ORF">GE26432</name>
</gene>
<dbReference type="EMBL" id="CM000160">
    <property type="protein sequence ID" value="EDW97548.1"/>
    <property type="molecule type" value="Genomic_DNA"/>
</dbReference>
<dbReference type="EnsemblMetazoa" id="FBtr0272950">
    <property type="protein sequence ID" value="FBpp0271442"/>
    <property type="gene ID" value="FBgn0243454"/>
</dbReference>
<dbReference type="EnsemblMetazoa" id="XM_002097800.3">
    <property type="protein sequence ID" value="XP_002097836.1"/>
    <property type="gene ID" value="LOC6537278"/>
</dbReference>
<dbReference type="GeneID" id="6537278"/>
<dbReference type="KEGG" id="dya:Dyak_GE26432"/>
<dbReference type="CTD" id="41783"/>
<dbReference type="eggNOG" id="KOG0940">
    <property type="taxonomic scope" value="Eukaryota"/>
</dbReference>
<dbReference type="eggNOG" id="KOG3209">
    <property type="taxonomic scope" value="Eukaryota"/>
</dbReference>
<dbReference type="HOGENOM" id="CLU_005420_1_0_1"/>
<dbReference type="OMA" id="QVTVVSM"/>
<dbReference type="OrthoDB" id="2020426at2759"/>
<dbReference type="PhylomeDB" id="B4PSQ2"/>
<dbReference type="ChiTaRS" id="kibra">
    <property type="organism name" value="fly"/>
</dbReference>
<dbReference type="Proteomes" id="UP000002282">
    <property type="component" value="Chromosome 3R"/>
</dbReference>
<dbReference type="GO" id="GO:0106037">
    <property type="term" value="C:apicomedial cortex"/>
    <property type="evidence" value="ECO:0007669"/>
    <property type="project" value="EnsemblMetazoa"/>
</dbReference>
<dbReference type="GO" id="GO:0005911">
    <property type="term" value="C:cell-cell junction"/>
    <property type="evidence" value="ECO:0007669"/>
    <property type="project" value="EnsemblMetazoa"/>
</dbReference>
<dbReference type="GO" id="GO:0098592">
    <property type="term" value="C:cytoplasmic side of apical plasma membrane"/>
    <property type="evidence" value="ECO:0007669"/>
    <property type="project" value="EnsemblMetazoa"/>
</dbReference>
<dbReference type="GO" id="GO:0036375">
    <property type="term" value="C:Kibra-Ex-Mer complex"/>
    <property type="evidence" value="ECO:0007669"/>
    <property type="project" value="EnsemblMetazoa"/>
</dbReference>
<dbReference type="GO" id="GO:0019900">
    <property type="term" value="F:kinase binding"/>
    <property type="evidence" value="ECO:0007669"/>
    <property type="project" value="TreeGrafter"/>
</dbReference>
<dbReference type="GO" id="GO:0060090">
    <property type="term" value="F:molecular adaptor activity"/>
    <property type="evidence" value="ECO:0007669"/>
    <property type="project" value="TreeGrafter"/>
</dbReference>
<dbReference type="GO" id="GO:0007298">
    <property type="term" value="P:border follicle cell migration"/>
    <property type="evidence" value="ECO:0007669"/>
    <property type="project" value="EnsemblMetazoa"/>
</dbReference>
<dbReference type="GO" id="GO:0060253">
    <property type="term" value="P:negative regulation of glial cell proliferation"/>
    <property type="evidence" value="ECO:0007669"/>
    <property type="project" value="EnsemblMetazoa"/>
</dbReference>
<dbReference type="GO" id="GO:0046621">
    <property type="term" value="P:negative regulation of organ growth"/>
    <property type="evidence" value="ECO:0007669"/>
    <property type="project" value="EnsemblMetazoa"/>
</dbReference>
<dbReference type="GO" id="GO:0043065">
    <property type="term" value="P:positive regulation of apoptotic process"/>
    <property type="evidence" value="ECO:0007669"/>
    <property type="project" value="EnsemblMetazoa"/>
</dbReference>
<dbReference type="GO" id="GO:0035332">
    <property type="term" value="P:positive regulation of hippo signaling"/>
    <property type="evidence" value="ECO:0000250"/>
    <property type="project" value="UniProtKB"/>
</dbReference>
<dbReference type="GO" id="GO:0045463">
    <property type="term" value="P:R8 cell development"/>
    <property type="evidence" value="ECO:0007669"/>
    <property type="project" value="EnsemblMetazoa"/>
</dbReference>
<dbReference type="GO" id="GO:0045464">
    <property type="term" value="P:R8 cell fate specification"/>
    <property type="evidence" value="ECO:0007669"/>
    <property type="project" value="EnsemblMetazoa"/>
</dbReference>
<dbReference type="GO" id="GO:0006355">
    <property type="term" value="P:regulation of DNA-templated transcription"/>
    <property type="evidence" value="ECO:0007669"/>
    <property type="project" value="EnsemblMetazoa"/>
</dbReference>
<dbReference type="CDD" id="cd08680">
    <property type="entry name" value="C2_Kibra"/>
    <property type="match status" value="1"/>
</dbReference>
<dbReference type="CDD" id="cd00201">
    <property type="entry name" value="WW"/>
    <property type="match status" value="2"/>
</dbReference>
<dbReference type="FunFam" id="2.60.40.150:FF:000228">
    <property type="entry name" value="Blast:Protein kibra"/>
    <property type="match status" value="1"/>
</dbReference>
<dbReference type="Gene3D" id="2.20.70.10">
    <property type="match status" value="2"/>
</dbReference>
<dbReference type="Gene3D" id="2.60.40.150">
    <property type="entry name" value="C2 domain"/>
    <property type="match status" value="1"/>
</dbReference>
<dbReference type="InterPro" id="IPR000008">
    <property type="entry name" value="C2_dom"/>
</dbReference>
<dbReference type="InterPro" id="IPR035892">
    <property type="entry name" value="C2_domain_sf"/>
</dbReference>
<dbReference type="InterPro" id="IPR037771">
    <property type="entry name" value="C2_WWC"/>
</dbReference>
<dbReference type="InterPro" id="IPR001202">
    <property type="entry name" value="WW_dom"/>
</dbReference>
<dbReference type="InterPro" id="IPR036020">
    <property type="entry name" value="WW_dom_sf"/>
</dbReference>
<dbReference type="InterPro" id="IPR051105">
    <property type="entry name" value="WWC/KIBRA_Hippo_Reg"/>
</dbReference>
<dbReference type="PANTHER" id="PTHR14791">
    <property type="entry name" value="BOMB/KIRA PROTEINS"/>
    <property type="match status" value="1"/>
</dbReference>
<dbReference type="PANTHER" id="PTHR14791:SF29">
    <property type="entry name" value="PROTEIN KIBRA"/>
    <property type="match status" value="1"/>
</dbReference>
<dbReference type="Pfam" id="PF00168">
    <property type="entry name" value="C2"/>
    <property type="match status" value="1"/>
</dbReference>
<dbReference type="Pfam" id="PF00397">
    <property type="entry name" value="WW"/>
    <property type="match status" value="2"/>
</dbReference>
<dbReference type="SMART" id="SM00239">
    <property type="entry name" value="C2"/>
    <property type="match status" value="1"/>
</dbReference>
<dbReference type="SMART" id="SM00456">
    <property type="entry name" value="WW"/>
    <property type="match status" value="2"/>
</dbReference>
<dbReference type="SUPFAM" id="SSF49562">
    <property type="entry name" value="C2 domain (Calcium/lipid-binding domain, CaLB)"/>
    <property type="match status" value="1"/>
</dbReference>
<dbReference type="SUPFAM" id="SSF51045">
    <property type="entry name" value="WW domain"/>
    <property type="match status" value="2"/>
</dbReference>
<dbReference type="PROSITE" id="PS50004">
    <property type="entry name" value="C2"/>
    <property type="match status" value="1"/>
</dbReference>
<dbReference type="PROSITE" id="PS01159">
    <property type="entry name" value="WW_DOMAIN_1"/>
    <property type="match status" value="1"/>
</dbReference>
<dbReference type="PROSITE" id="PS50020">
    <property type="entry name" value="WW_DOMAIN_2"/>
    <property type="match status" value="2"/>
</dbReference>
<reference key="1">
    <citation type="journal article" date="2007" name="Nature">
        <title>Evolution of genes and genomes on the Drosophila phylogeny.</title>
        <authorList>
            <consortium name="Drosophila 12 genomes consortium"/>
        </authorList>
    </citation>
    <scope>NUCLEOTIDE SEQUENCE [LARGE SCALE GENOMIC DNA]</scope>
    <source>
        <strain>Tai18E2 / Tucson 14021-0261.01</strain>
    </source>
</reference>
<evidence type="ECO:0000250" key="1"/>
<evidence type="ECO:0000255" key="2"/>
<evidence type="ECO:0000255" key="3">
    <source>
        <dbReference type="PROSITE-ProRule" id="PRU00041"/>
    </source>
</evidence>
<evidence type="ECO:0000255" key="4">
    <source>
        <dbReference type="PROSITE-ProRule" id="PRU00224"/>
    </source>
</evidence>
<evidence type="ECO:0000256" key="5">
    <source>
        <dbReference type="SAM" id="MobiDB-lite"/>
    </source>
</evidence>
<evidence type="ECO:0000305" key="6"/>
<name>KIBRA_DROYA</name>
<protein>
    <recommendedName>
        <fullName>Protein kibra</fullName>
    </recommendedName>
</protein>
<proteinExistence type="inferred from homology"/>
<comment type="function">
    <text evidence="1">Regulator of the Hippo/SWH (Sav/Wts/Hpo) signaling pathway, a signaling pathway that plays a pivotal role in organ size control and tumor suppression by restricting proliferation and promoting apoptosis. The core of this pathway is composed of a kinase cascade wherein Hippo (Hpo), in complex with its regulatory protein Salvador (Sav), phosphorylates and activates Warts (Wts) in complex with its regulatory protein Mats, which in turn phosphorylates and inactivates the Yorkie (Yki) oncoprotein. Kibra acts synergistically along with Ex and Mer to regulate the Hippo signaling pathway (By similarity).</text>
</comment>
<comment type="subunit">
    <text evidence="1">Forms a complex with Mer and Ex. Interacts (via domain WW 1) with Ex (via RXPPXY motif). Interacts with Mer, Sav, Hpo and Wts (By similarity).</text>
</comment>
<comment type="subcellular location">
    <subcellularLocation>
        <location evidence="1">Cytoplasm</location>
    </subcellularLocation>
    <subcellularLocation>
        <location evidence="1">Apical cell membrane</location>
    </subcellularLocation>
    <text evidence="1">Localizes at the apical cortex of epithelial cells and cytoplasmic, punctate.</text>
</comment>
<comment type="similarity">
    <text evidence="6">Belongs to the WWC family. KIBRA subfamily.</text>
</comment>
<organism>
    <name type="scientific">Drosophila yakuba</name>
    <name type="common">Fruit fly</name>
    <dbReference type="NCBI Taxonomy" id="7245"/>
    <lineage>
        <taxon>Eukaryota</taxon>
        <taxon>Metazoa</taxon>
        <taxon>Ecdysozoa</taxon>
        <taxon>Arthropoda</taxon>
        <taxon>Hexapoda</taxon>
        <taxon>Insecta</taxon>
        <taxon>Pterygota</taxon>
        <taxon>Neoptera</taxon>
        <taxon>Endopterygota</taxon>
        <taxon>Diptera</taxon>
        <taxon>Brachycera</taxon>
        <taxon>Muscomorpha</taxon>
        <taxon>Ephydroidea</taxon>
        <taxon>Drosophilidae</taxon>
        <taxon>Drosophila</taxon>
        <taxon>Sophophora</taxon>
    </lineage>
</organism>
<keyword id="KW-1003">Cell membrane</keyword>
<keyword id="KW-0175">Coiled coil</keyword>
<keyword id="KW-0963">Cytoplasm</keyword>
<keyword id="KW-0472">Membrane</keyword>
<keyword id="KW-0597">Phosphoprotein</keyword>
<keyword id="KW-0677">Repeat</keyword>
<keyword id="KW-0804">Transcription</keyword>
<keyword id="KW-0805">Transcription regulation</keyword>
<feature type="chain" id="PRO_0000392976" description="Protein kibra">
    <location>
        <begin position="1"/>
        <end position="1288"/>
    </location>
</feature>
<feature type="domain" description="WW 1" evidence="4">
    <location>
        <begin position="54"/>
        <end position="87"/>
    </location>
</feature>
<feature type="domain" description="WW 2" evidence="4">
    <location>
        <begin position="101"/>
        <end position="134"/>
    </location>
</feature>
<feature type="domain" description="C2" evidence="3">
    <location>
        <begin position="691"/>
        <end position="811"/>
    </location>
</feature>
<feature type="region of interest" description="Disordered" evidence="5">
    <location>
        <begin position="1"/>
        <end position="60"/>
    </location>
</feature>
<feature type="region of interest" description="Disordered" evidence="5">
    <location>
        <begin position="541"/>
        <end position="560"/>
    </location>
</feature>
<feature type="region of interest" description="Disordered" evidence="5">
    <location>
        <begin position="841"/>
        <end position="870"/>
    </location>
</feature>
<feature type="region of interest" description="Disordered" evidence="5">
    <location>
        <begin position="890"/>
        <end position="913"/>
    </location>
</feature>
<feature type="region of interest" description="Disordered" evidence="5">
    <location>
        <begin position="942"/>
        <end position="972"/>
    </location>
</feature>
<feature type="region of interest" description="Disordered" evidence="5">
    <location>
        <begin position="1253"/>
        <end position="1272"/>
    </location>
</feature>
<feature type="coiled-coil region" evidence="2">
    <location>
        <begin position="201"/>
        <end position="229"/>
    </location>
</feature>
<feature type="coiled-coil region" evidence="2">
    <location>
        <begin position="335"/>
        <end position="463"/>
    </location>
</feature>
<feature type="coiled-coil region" evidence="2">
    <location>
        <begin position="1049"/>
        <end position="1076"/>
    </location>
</feature>
<feature type="compositionally biased region" description="Low complexity" evidence="5">
    <location>
        <begin position="1"/>
        <end position="14"/>
    </location>
</feature>
<feature type="compositionally biased region" description="Basic residues" evidence="5">
    <location>
        <begin position="15"/>
        <end position="28"/>
    </location>
</feature>
<feature type="compositionally biased region" description="Low complexity" evidence="5">
    <location>
        <begin position="29"/>
        <end position="49"/>
    </location>
</feature>
<feature type="compositionally biased region" description="Polar residues" evidence="5">
    <location>
        <begin position="541"/>
        <end position="550"/>
    </location>
</feature>
<feature type="compositionally biased region" description="Low complexity" evidence="5">
    <location>
        <begin position="857"/>
        <end position="869"/>
    </location>
</feature>
<feature type="compositionally biased region" description="Acidic residues" evidence="5">
    <location>
        <begin position="896"/>
        <end position="910"/>
    </location>
</feature>
<feature type="compositionally biased region" description="Basic and acidic residues" evidence="5">
    <location>
        <begin position="942"/>
        <end position="966"/>
    </location>
</feature>
<sequence length="1288" mass="144094">MPNLQQTASQSQSQHHLHPHHLRPHQQQHHQQQQQQQQQQHTHHQQQQQHHSDFPLPDGWDIAKDFDGKTYYIDHINKKTTWLDPRDCYTKPQTFEDCVGDELPMGWEESYDPNIGPYYINHLAQSTQLEDPRQEWKTVQEQMLSDYLSAAQDQLENKREMFDVKQQRLLWAQEEYNHLKLAASRSSLCSSSSSMSRHDPELLRADLMLARERVHQLKQELTHITNDISYTERGMNTLYSVGEKINARENGCYDIAEVQAIREEMLKVHKSLVSGEKVREELMRSLVQIKNELGRQQISEENSDLASPFDRVCVASQTDLCGSSGDNLNGGARFAEMAKTKLQYAEWRKHIKKLQQQLADHVERIEPGQLESDKDRILLIQEKEKLLNDLNSISLKSRSEEEKRVIHQTRHKLEEDLKEAYEANNTCVANRLRFHEEKQLLLDKLQEALKSTKLLEERLKSFSSESTFSISSGSSLGSLSTASSKSALSFTDIYIDPFAVDSPIDVVDLRRRSQRLFQQHQQQRLHPVHPVLQQQQSAEVTLSPRSSLSMETPPASPMKYNAGADQTPQALKEEPTYANALPAPPAYTAPPPVPISGVRARPYDLDSTVLDCMMLEAKLQKLNMGTPLNLAAAPLSPISEKPSLLDLPQEMLSRSSSTSNTRSVSAAVSNESVAGDSGVFEASRAHLPRKELAQVQIGLKYLKQEGVLVVSLERANNLLALWTASADNSQVYLRAALLPNSLTSIRTKALGDFQKPVFNDTFAVPITLDKLLTKSLQVTVVTMTGQKEEIIGTVQISMAEFNPEDSTLKWYNVLSSKFIPSFESLDIPSTSAAAAAAAVAASNAPNSGNNREESSDESTITSSQTSTLTRNQAPCMELQEQIAAELLELGPLNEPECSDDDDDDEEEELDDKQLVSDVGLMNSSGMLDAYLQNMKQEFADKETNTDRAYLPEKSRGQSQLMDDRPVKRSQTFTPSAAVSKNRYNCRLNRSDSDSAMHCGVAPHTFQRGAAERRSLRFHTKAPKSVTKLHHTHIPRTSLDLELDLQAQHSKLYFLNDQIAKLQNLKEVLQKACENKDPLVAAWAIENEEFQRLVARADPAKCPEERQLQKLLMKTAKEIHKLRKTKVPKGCPDLVSFKEKITFFTRKGLSVPELPSEFTLPEANPIEEEEEEEDEDEFYNSAETAIAINTALVASSNRNKNLSEHPHRATSGAVPKLPAPVATPAATPAATPVATPVATPVATPAATPVVSPAVQTDAKPAAAPIPVASSDAEQQRFDYVVDRNYGVEV</sequence>
<accession>B4PSQ2</accession>